<comment type="function">
    <text evidence="4">Involved in degradation of plant cell wall polysaccharides. Bifunctional esterase that possesses both acetyl esterase and ferulic acid esterase activities. Has deacetylase activity towards acetylated xylo-oligosaccharides smaller than xylo-heptaose, as well as from glucose-pentaacetate. Is also able to release ferulic acid from methylferulate, and from the more natural substrates wheat bran, corn fiber, and XOS(FA,Ac), a corn fiber-derived substrate enriched in O-acetyl and ferulic acid esters.</text>
</comment>
<comment type="catalytic activity">
    <reaction evidence="4">
        <text>feruloyl-polysaccharide + H2O = ferulate + polysaccharide.</text>
        <dbReference type="EC" id="3.1.1.73"/>
    </reaction>
</comment>
<comment type="biophysicochemical properties">
    <phDependence>
        <text evidence="4">Optimum pH is 6.5 with glucose-pentaacetate as substrate. Active from pH 5.0 to 8.0.</text>
    </phDependence>
    <temperatureDependence>
        <text evidence="4">Optimum temperature is 35 degrees Celsius with glucose-pentaacetate as substrate. Active from 20 to 50 degrees Celsius. Still exhibits 40 to 70% of the maximum activity after 20 hours of incubation at 50 degrees Celsius.</text>
    </temperatureDependence>
</comment>
<comment type="pathway">
    <text evidence="4">Glycan degradation; xylan degradation.</text>
</comment>
<comment type="induction">
    <text evidence="4">By growth on ester-enriched corn oligosaccharides.</text>
</comment>
<comment type="domain">
    <text evidence="4">Is predicted to have two esterase domains corresponding to distinct carbohydrate esterase families, CE1 and CE6. It can be hypothesized that the release of acetic acid is related to the CE6 domain, while the release of ferulic acid may relate to the CE1 domain.</text>
</comment>
<comment type="similarity">
    <text evidence="6">In the N-terminal section; belongs to the carbohydrate esterase 6 family.</text>
</comment>
<organism>
    <name type="scientific">Xylanibacter ruminicola (strain ATCC 19189 / DSM 19721 / CIP 105475 / JCM 8958 / 23)</name>
    <name type="common">Prevotella ruminicola</name>
    <dbReference type="NCBI Taxonomy" id="264731"/>
    <lineage>
        <taxon>Bacteria</taxon>
        <taxon>Pseudomonadati</taxon>
        <taxon>Bacteroidota</taxon>
        <taxon>Bacteroidia</taxon>
        <taxon>Bacteroidales</taxon>
        <taxon>Prevotellaceae</taxon>
        <taxon>Xylanibacter</taxon>
    </lineage>
</organism>
<keyword id="KW-0119">Carbohydrate metabolism</keyword>
<keyword id="KW-0378">Hydrolase</keyword>
<keyword id="KW-0511">Multifunctional enzyme</keyword>
<keyword id="KW-0624">Polysaccharide degradation</keyword>
<keyword id="KW-1185">Reference proteome</keyword>
<keyword id="KW-0732">Signal</keyword>
<keyword id="KW-0858">Xylan degradation</keyword>
<accession>D5EXZ4</accession>
<gene>
    <name evidence="5" type="primary">axe1-6A</name>
    <name type="ordered locus">PRU_2707</name>
</gene>
<feature type="signal peptide" evidence="2">
    <location>
        <begin position="1"/>
        <end position="24"/>
    </location>
</feature>
<feature type="chain" id="PRO_0000422404" description="Carbohydrate acetyl esterase/feruloyl esterase">
    <location>
        <begin position="25"/>
        <end position="671"/>
    </location>
</feature>
<feature type="region of interest" description="Carbohydrate acetyl esterase">
    <location>
        <begin position="1"/>
        <end position="296"/>
    </location>
</feature>
<feature type="region of interest" description="Feruloyl esterase">
    <location>
        <begin position="297"/>
        <end position="671"/>
    </location>
</feature>
<feature type="active site" description="For acetyl esterase activity" evidence="1">
    <location>
        <position position="55"/>
    </location>
</feature>
<feature type="active site" description="For acetyl esterase activity" evidence="1">
    <location>
        <position position="271"/>
    </location>
</feature>
<feature type="active site" description="For acetyl esterase activity" evidence="1">
    <location>
        <position position="274"/>
    </location>
</feature>
<protein>
    <recommendedName>
        <fullName>Carbohydrate acetyl esterase/feruloyl esterase</fullName>
    </recommendedName>
    <domain>
        <recommendedName>
            <fullName>Carbohydrate acetyl esterase</fullName>
            <ecNumber evidence="4">3.1.1.-</ecNumber>
        </recommendedName>
    </domain>
    <domain>
        <recommendedName>
            <fullName evidence="5">Feruloyl esterase</fullName>
            <ecNumber evidence="4">3.1.1.73</ecNumber>
        </recommendedName>
        <alternativeName>
            <fullName>Ferulic acid esterase</fullName>
        </alternativeName>
    </domain>
</protein>
<dbReference type="EC" id="3.1.1.-" evidence="4"/>
<dbReference type="EC" id="3.1.1.73" evidence="4"/>
<dbReference type="EMBL" id="CP002006">
    <property type="protein sequence ID" value="ADE82678.1"/>
    <property type="molecule type" value="Genomic_DNA"/>
</dbReference>
<dbReference type="RefSeq" id="WP_013064664.1">
    <property type="nucleotide sequence ID" value="NC_014033.1"/>
</dbReference>
<dbReference type="SMR" id="D5EXZ4"/>
<dbReference type="STRING" id="264731.PRU_2707"/>
<dbReference type="ESTHER" id="prer2-axfa">
    <property type="family name" value="A85-Feruloyl-Esterase"/>
</dbReference>
<dbReference type="GeneID" id="31502238"/>
<dbReference type="KEGG" id="pru:PRU_2707"/>
<dbReference type="eggNOG" id="COG2382">
    <property type="taxonomic scope" value="Bacteria"/>
</dbReference>
<dbReference type="HOGENOM" id="CLU_015241_0_0_10"/>
<dbReference type="UniPathway" id="UPA00114"/>
<dbReference type="Proteomes" id="UP000000927">
    <property type="component" value="Chromosome"/>
</dbReference>
<dbReference type="GO" id="GO:0016747">
    <property type="term" value="F:acyltransferase activity, transferring groups other than amino-acyl groups"/>
    <property type="evidence" value="ECO:0007669"/>
    <property type="project" value="TreeGrafter"/>
</dbReference>
<dbReference type="GO" id="GO:0030600">
    <property type="term" value="F:feruloyl esterase activity"/>
    <property type="evidence" value="ECO:0007669"/>
    <property type="project" value="UniProtKB-EC"/>
</dbReference>
<dbReference type="GO" id="GO:0045493">
    <property type="term" value="P:xylan catabolic process"/>
    <property type="evidence" value="ECO:0007669"/>
    <property type="project" value="UniProtKB-UniPathway"/>
</dbReference>
<dbReference type="CDD" id="cd02858">
    <property type="entry name" value="E_set_Esterase_N"/>
    <property type="match status" value="1"/>
</dbReference>
<dbReference type="Gene3D" id="3.40.50.1820">
    <property type="entry name" value="alpha/beta hydrolase"/>
    <property type="match status" value="1"/>
</dbReference>
<dbReference type="Gene3D" id="2.60.40.10">
    <property type="entry name" value="Immunoglobulins"/>
    <property type="match status" value="1"/>
</dbReference>
<dbReference type="Gene3D" id="3.40.50.1110">
    <property type="entry name" value="SGNH hydrolase"/>
    <property type="match status" value="1"/>
</dbReference>
<dbReference type="InterPro" id="IPR029058">
    <property type="entry name" value="AB_hydrolase_fold"/>
</dbReference>
<dbReference type="InterPro" id="IPR000801">
    <property type="entry name" value="Esterase-like"/>
</dbReference>
<dbReference type="InterPro" id="IPR013783">
    <property type="entry name" value="Ig-like_fold"/>
</dbReference>
<dbReference type="InterPro" id="IPR014756">
    <property type="entry name" value="Ig_E-set"/>
</dbReference>
<dbReference type="InterPro" id="IPR050583">
    <property type="entry name" value="Mycobacterial_A85_antigen"/>
</dbReference>
<dbReference type="InterPro" id="IPR005181">
    <property type="entry name" value="SASA"/>
</dbReference>
<dbReference type="InterPro" id="IPR036514">
    <property type="entry name" value="SGNH_hydro_sf"/>
</dbReference>
<dbReference type="PANTHER" id="PTHR48098:SF1">
    <property type="entry name" value="DIACYLGLYCEROL ACYLTRANSFERASE_MYCOLYLTRANSFERASE AG85A"/>
    <property type="match status" value="1"/>
</dbReference>
<dbReference type="PANTHER" id="PTHR48098">
    <property type="entry name" value="ENTEROCHELIN ESTERASE-RELATED"/>
    <property type="match status" value="1"/>
</dbReference>
<dbReference type="Pfam" id="PF00756">
    <property type="entry name" value="Esterase"/>
    <property type="match status" value="1"/>
</dbReference>
<dbReference type="Pfam" id="PF03629">
    <property type="entry name" value="SASA"/>
    <property type="match status" value="1"/>
</dbReference>
<dbReference type="SUPFAM" id="SSF53474">
    <property type="entry name" value="alpha/beta-Hydrolases"/>
    <property type="match status" value="1"/>
</dbReference>
<dbReference type="SUPFAM" id="SSF81296">
    <property type="entry name" value="E set domains"/>
    <property type="match status" value="1"/>
</dbReference>
<dbReference type="SUPFAM" id="SSF52266">
    <property type="entry name" value="SGNH hydrolase"/>
    <property type="match status" value="1"/>
</dbReference>
<proteinExistence type="evidence at protein level"/>
<sequence>MYQSTLKTILLASALLILPASMSAQKRKAAPKKAATEQVGKPDPNFYIFLCFGQSNMEGNARPEAQDLTSPGPRFLLMPAVDFPEKGRKMGEWCEASAPLCRPNTGLTPADWFGRTLVASLPENIKIGVIHVAIGGIDIKGFLPDSIQNYLKVAPNWMKGMLAAYDNNPYERLVTLAKKAQKDGVIKGILMHQGETNTGDPKWAGMVKQVYDNLCGDLNLKPEEVNLYAGNIVQADGKGVCIGCKKQIDELPLTLHTSQVISSDGCTNGPDRLHFDAAGYRELGCRYGEAVARHLGYEPKRPYIEMPKQIEVPADAFIAETTVPGNEFPKVDKEGRAYFRIAAPEARKVVLDICNKKYDMQRDGKGNFMAVTDPLPVGFHYYFLNINGVNFIDPSTETFFGCNRESGGIEIPEGSEGDYYRPQQGVPAGQVRSIYYYSNEQQTWRHAMVYTPAEYELAKNAKKRYPVLYLQHGMGEDETGWSKQGHMQHIMDNAIAKGEAVPMIVVMESGDIKAPFGGGNNQAGRSAYGASFYPVLLNDLIPYIDSNYRTKSDRENRAMAGLSWGGHQTFDVVLTNLDKFAWLGTFSGAIFGLDVKTAYDGVFANADEFNKKIHYMYMNWGEEDFIKSGDIVKQLRELGIKVDSNESKGTAHEWLTWRRGLNEFIPHLFKK</sequence>
<name>AXFA_XYLR2</name>
<evidence type="ECO:0000250" key="1"/>
<evidence type="ECO:0000255" key="2"/>
<evidence type="ECO:0000269" key="3">
    <source>
    </source>
</evidence>
<evidence type="ECO:0000269" key="4">
    <source>
    </source>
</evidence>
<evidence type="ECO:0000303" key="5">
    <source>
    </source>
</evidence>
<evidence type="ECO:0000305" key="6"/>
<evidence type="ECO:0000312" key="7">
    <source>
        <dbReference type="EMBL" id="ADE82678.1"/>
    </source>
</evidence>
<reference evidence="6 7" key="1">
    <citation type="journal article" date="2010" name="Microb. Ecol.">
        <title>Comparative genome analysis of Prevotella ruminicola and Prevotella bryantii: insights into their environmental niche.</title>
        <authorList>
            <person name="Purushe J."/>
            <person name="Fouts D.E."/>
            <person name="Morrison M."/>
            <person name="White B.A."/>
            <person name="Mackie R.I."/>
            <person name="Coutinho P.M."/>
            <person name="Henrissat B."/>
            <person name="Nelson K.E."/>
        </authorList>
    </citation>
    <scope>NUCLEOTIDE SEQUENCE [LARGE SCALE GENOMIC DNA]</scope>
    <source>
        <strain evidence="3">ATCC 19189 / DSM 19721 / CIP 105475 / JCM 8958 / 23</strain>
    </source>
</reference>
<reference evidence="6" key="2">
    <citation type="journal article" date="2011" name="Appl. Environ. Microbiol.">
        <title>Biochemical characterization and relative expression levels of multiple carbohydrate esterases of the xylanolytic rumen bacterium Prevotella ruminicola 23 grown on an ester-enriched substrate.</title>
        <authorList>
            <person name="Kabel M.A."/>
            <person name="Yeoman C.J."/>
            <person name="Han Y."/>
            <person name="Dodd D."/>
            <person name="Abbas C.A."/>
            <person name="de Bont J.A."/>
            <person name="Morrison M."/>
            <person name="Cann I.K."/>
            <person name="Mackie R.I."/>
        </authorList>
    </citation>
    <scope>FUNCTION</scope>
    <scope>CATALYTIC ACTIVITY</scope>
    <scope>INDUCTION</scope>
    <scope>BIOPHYSICOCHEMICAL PROPERTIES</scope>
    <scope>DOMAIN</scope>
    <scope>PATHWAY</scope>
    <scope>IDENTIFICATION BY MASS SPECTROMETRY</scope>
    <scope>SUBSTRATE SPECIFICITY</scope>
    <source>
        <strain evidence="4">ATCC 19189 / DSM 19721 / CIP 105475 / JCM 8958 / 23</strain>
    </source>
</reference>